<evidence type="ECO:0000305" key="1"/>
<protein>
    <recommendedName>
        <fullName>Protein CotJC</fullName>
    </recommendedName>
</protein>
<reference key="1">
    <citation type="journal article" date="1995" name="J. Bacteriol.">
        <title>Characterization of cotJ, a sigma E-controlled operon affecting the polypeptide composition of the coat of Bacillus subtilis spores.</title>
        <authorList>
            <person name="Henriques A.O."/>
            <person name="Beall B.W."/>
            <person name="Roland K."/>
            <person name="Moran C.P. Jr."/>
        </authorList>
    </citation>
    <scope>NUCLEOTIDE SEQUENCE [GENOMIC DNA]</scope>
    <source>
        <strain>168</strain>
    </source>
</reference>
<reference key="2">
    <citation type="journal article" date="1997" name="Nature">
        <title>The complete genome sequence of the Gram-positive bacterium Bacillus subtilis.</title>
        <authorList>
            <person name="Kunst F."/>
            <person name="Ogasawara N."/>
            <person name="Moszer I."/>
            <person name="Albertini A.M."/>
            <person name="Alloni G."/>
            <person name="Azevedo V."/>
            <person name="Bertero M.G."/>
            <person name="Bessieres P."/>
            <person name="Bolotin A."/>
            <person name="Borchert S."/>
            <person name="Borriss R."/>
            <person name="Boursier L."/>
            <person name="Brans A."/>
            <person name="Braun M."/>
            <person name="Brignell S.C."/>
            <person name="Bron S."/>
            <person name="Brouillet S."/>
            <person name="Bruschi C.V."/>
            <person name="Caldwell B."/>
            <person name="Capuano V."/>
            <person name="Carter N.M."/>
            <person name="Choi S.-K."/>
            <person name="Codani J.-J."/>
            <person name="Connerton I.F."/>
            <person name="Cummings N.J."/>
            <person name="Daniel R.A."/>
            <person name="Denizot F."/>
            <person name="Devine K.M."/>
            <person name="Duesterhoeft A."/>
            <person name="Ehrlich S.D."/>
            <person name="Emmerson P.T."/>
            <person name="Entian K.-D."/>
            <person name="Errington J."/>
            <person name="Fabret C."/>
            <person name="Ferrari E."/>
            <person name="Foulger D."/>
            <person name="Fritz C."/>
            <person name="Fujita M."/>
            <person name="Fujita Y."/>
            <person name="Fuma S."/>
            <person name="Galizzi A."/>
            <person name="Galleron N."/>
            <person name="Ghim S.-Y."/>
            <person name="Glaser P."/>
            <person name="Goffeau A."/>
            <person name="Golightly E.J."/>
            <person name="Grandi G."/>
            <person name="Guiseppi G."/>
            <person name="Guy B.J."/>
            <person name="Haga K."/>
            <person name="Haiech J."/>
            <person name="Harwood C.R."/>
            <person name="Henaut A."/>
            <person name="Hilbert H."/>
            <person name="Holsappel S."/>
            <person name="Hosono S."/>
            <person name="Hullo M.-F."/>
            <person name="Itaya M."/>
            <person name="Jones L.-M."/>
            <person name="Joris B."/>
            <person name="Karamata D."/>
            <person name="Kasahara Y."/>
            <person name="Klaerr-Blanchard M."/>
            <person name="Klein C."/>
            <person name="Kobayashi Y."/>
            <person name="Koetter P."/>
            <person name="Koningstein G."/>
            <person name="Krogh S."/>
            <person name="Kumano M."/>
            <person name="Kurita K."/>
            <person name="Lapidus A."/>
            <person name="Lardinois S."/>
            <person name="Lauber J."/>
            <person name="Lazarevic V."/>
            <person name="Lee S.-M."/>
            <person name="Levine A."/>
            <person name="Liu H."/>
            <person name="Masuda S."/>
            <person name="Mauel C."/>
            <person name="Medigue C."/>
            <person name="Medina N."/>
            <person name="Mellado R.P."/>
            <person name="Mizuno M."/>
            <person name="Moestl D."/>
            <person name="Nakai S."/>
            <person name="Noback M."/>
            <person name="Noone D."/>
            <person name="O'Reilly M."/>
            <person name="Ogawa K."/>
            <person name="Ogiwara A."/>
            <person name="Oudega B."/>
            <person name="Park S.-H."/>
            <person name="Parro V."/>
            <person name="Pohl T.M."/>
            <person name="Portetelle D."/>
            <person name="Porwollik S."/>
            <person name="Prescott A.M."/>
            <person name="Presecan E."/>
            <person name="Pujic P."/>
            <person name="Purnelle B."/>
            <person name="Rapoport G."/>
            <person name="Rey M."/>
            <person name="Reynolds S."/>
            <person name="Rieger M."/>
            <person name="Rivolta C."/>
            <person name="Rocha E."/>
            <person name="Roche B."/>
            <person name="Rose M."/>
            <person name="Sadaie Y."/>
            <person name="Sato T."/>
            <person name="Scanlan E."/>
            <person name="Schleich S."/>
            <person name="Schroeter R."/>
            <person name="Scoffone F."/>
            <person name="Sekiguchi J."/>
            <person name="Sekowska A."/>
            <person name="Seror S.J."/>
            <person name="Serror P."/>
            <person name="Shin B.-S."/>
            <person name="Soldo B."/>
            <person name="Sorokin A."/>
            <person name="Tacconi E."/>
            <person name="Takagi T."/>
            <person name="Takahashi H."/>
            <person name="Takemaru K."/>
            <person name="Takeuchi M."/>
            <person name="Tamakoshi A."/>
            <person name="Tanaka T."/>
            <person name="Terpstra P."/>
            <person name="Tognoni A."/>
            <person name="Tosato V."/>
            <person name="Uchiyama S."/>
            <person name="Vandenbol M."/>
            <person name="Vannier F."/>
            <person name="Vassarotti A."/>
            <person name="Viari A."/>
            <person name="Wambutt R."/>
            <person name="Wedler E."/>
            <person name="Wedler H."/>
            <person name="Weitzenegger T."/>
            <person name="Winters P."/>
            <person name="Wipat A."/>
            <person name="Yamamoto H."/>
            <person name="Yamane K."/>
            <person name="Yasumoto K."/>
            <person name="Yata K."/>
            <person name="Yoshida K."/>
            <person name="Yoshikawa H.-F."/>
            <person name="Zumstein E."/>
            <person name="Yoshikawa H."/>
            <person name="Danchin A."/>
        </authorList>
    </citation>
    <scope>NUCLEOTIDE SEQUENCE [LARGE SCALE GENOMIC DNA]</scope>
    <source>
        <strain>168</strain>
    </source>
</reference>
<gene>
    <name type="primary">cotJC</name>
    <name type="ordered locus">BSU06910</name>
</gene>
<keyword id="KW-1185">Reference proteome</keyword>
<sequence>MWVYEKKLQYPVKVSTCNPTLAKYLIEQYGGADGELAAALRYLNQRYTIPDKVIGLLTDIGTEEFAHLEMIATMVYKLTKDATPEQLREAGLGDHYVNHDSALFYHNAAGVPFTASYIQAKGDPIADLYEDIAAEEKARATYQWLIDISDDPDLNDSLRFLREREIVHSMRFREAVEILKEERDKKKIF</sequence>
<organism>
    <name type="scientific">Bacillus subtilis (strain 168)</name>
    <dbReference type="NCBI Taxonomy" id="224308"/>
    <lineage>
        <taxon>Bacteria</taxon>
        <taxon>Bacillati</taxon>
        <taxon>Bacillota</taxon>
        <taxon>Bacilli</taxon>
        <taxon>Bacillales</taxon>
        <taxon>Bacillaceae</taxon>
        <taxon>Bacillus</taxon>
    </lineage>
</organism>
<comment type="function">
    <text>The cotJ operon proteins affect spore coat composition. They are either required for the normal formation of the inner layers of the coat or are themselves structural components of the coat.</text>
</comment>
<comment type="similarity">
    <text evidence="1">Belongs to the manganese catalase family.</text>
</comment>
<proteinExistence type="inferred from homology"/>
<name>COTJC_BACSU</name>
<dbReference type="EMBL" id="L38014">
    <property type="protein sequence ID" value="AAB17590.1"/>
    <property type="molecule type" value="Genomic_DNA"/>
</dbReference>
<dbReference type="EMBL" id="AL009126">
    <property type="protein sequence ID" value="CAB12510.1"/>
    <property type="molecule type" value="Genomic_DNA"/>
</dbReference>
<dbReference type="PIR" id="H69605">
    <property type="entry name" value="H69605"/>
</dbReference>
<dbReference type="RefSeq" id="NP_388572.1">
    <property type="nucleotide sequence ID" value="NC_000964.3"/>
</dbReference>
<dbReference type="RefSeq" id="WP_003233850.1">
    <property type="nucleotide sequence ID" value="NZ_OZ025638.1"/>
</dbReference>
<dbReference type="SMR" id="Q45538"/>
<dbReference type="DIP" id="DIP-409N"/>
<dbReference type="FunCoup" id="Q45538">
    <property type="interactions" value="15"/>
</dbReference>
<dbReference type="STRING" id="224308.BSU06910"/>
<dbReference type="PaxDb" id="224308-BSU06910"/>
<dbReference type="EnsemblBacteria" id="CAB12510">
    <property type="protein sequence ID" value="CAB12510"/>
    <property type="gene ID" value="BSU_06910"/>
</dbReference>
<dbReference type="GeneID" id="938762"/>
<dbReference type="KEGG" id="bsu:BSU06910"/>
<dbReference type="PATRIC" id="fig|224308.179.peg.751"/>
<dbReference type="eggNOG" id="COG3546">
    <property type="taxonomic scope" value="Bacteria"/>
</dbReference>
<dbReference type="InParanoid" id="Q45538"/>
<dbReference type="OrthoDB" id="9800585at2"/>
<dbReference type="PhylomeDB" id="Q45538"/>
<dbReference type="BioCyc" id="BSUB:BSU06910-MONOMER"/>
<dbReference type="Proteomes" id="UP000001570">
    <property type="component" value="Chromosome"/>
</dbReference>
<dbReference type="CDD" id="cd01051">
    <property type="entry name" value="Mn_catalase"/>
    <property type="match status" value="1"/>
</dbReference>
<dbReference type="FunFam" id="1.20.1260.10:FF:000011">
    <property type="entry name" value="Spore coat protein CotJC"/>
    <property type="match status" value="1"/>
</dbReference>
<dbReference type="Gene3D" id="1.20.1260.10">
    <property type="match status" value="1"/>
</dbReference>
<dbReference type="InterPro" id="IPR012347">
    <property type="entry name" value="Ferritin-like"/>
</dbReference>
<dbReference type="InterPro" id="IPR009078">
    <property type="entry name" value="Ferritin-like_SF"/>
</dbReference>
<dbReference type="InterPro" id="IPR007760">
    <property type="entry name" value="Mn_catalase"/>
</dbReference>
<dbReference type="InterPro" id="IPR039377">
    <property type="entry name" value="Mn_catalase_dom"/>
</dbReference>
<dbReference type="Pfam" id="PF05067">
    <property type="entry name" value="Mn_catalase"/>
    <property type="match status" value="1"/>
</dbReference>
<dbReference type="SUPFAM" id="SSF47240">
    <property type="entry name" value="Ferritin-like"/>
    <property type="match status" value="1"/>
</dbReference>
<accession>Q45538</accession>
<feature type="chain" id="PRO_0000096156" description="Protein CotJC">
    <location>
        <begin position="1"/>
        <end position="189"/>
    </location>
</feature>